<sequence length="41" mass="5018">MKIKNSLKALKERHRNNRLVRRKGRVYILNKTNPRFRARQG</sequence>
<protein>
    <recommendedName>
        <fullName evidence="1">Large ribosomal subunit protein bL36</fullName>
    </recommendedName>
    <alternativeName>
        <fullName evidence="2">50S ribosomal protein L36</fullName>
    </alternativeName>
</protein>
<gene>
    <name evidence="1" type="primary">rpmJ</name>
    <name type="ordered locus">BT_2059</name>
</gene>
<feature type="chain" id="PRO_1000078463" description="Large ribosomal subunit protein bL36">
    <location>
        <begin position="1"/>
        <end position="41"/>
    </location>
</feature>
<proteinExistence type="inferred from homology"/>
<organism>
    <name type="scientific">Bartonella tribocorum (strain CIP 105476 / IBS 506)</name>
    <dbReference type="NCBI Taxonomy" id="382640"/>
    <lineage>
        <taxon>Bacteria</taxon>
        <taxon>Pseudomonadati</taxon>
        <taxon>Pseudomonadota</taxon>
        <taxon>Alphaproteobacteria</taxon>
        <taxon>Hyphomicrobiales</taxon>
        <taxon>Bartonellaceae</taxon>
        <taxon>Bartonella</taxon>
    </lineage>
</organism>
<evidence type="ECO:0000255" key="1">
    <source>
        <dbReference type="HAMAP-Rule" id="MF_00251"/>
    </source>
</evidence>
<evidence type="ECO:0000305" key="2"/>
<dbReference type="EMBL" id="AM260525">
    <property type="protein sequence ID" value="CAK02227.1"/>
    <property type="molecule type" value="Genomic_DNA"/>
</dbReference>
<dbReference type="SMR" id="A9IXS0"/>
<dbReference type="KEGG" id="btr:BT_2059"/>
<dbReference type="eggNOG" id="COG0257">
    <property type="taxonomic scope" value="Bacteria"/>
</dbReference>
<dbReference type="HOGENOM" id="CLU_135723_3_2_5"/>
<dbReference type="Proteomes" id="UP000001592">
    <property type="component" value="Chromosome"/>
</dbReference>
<dbReference type="GO" id="GO:1990904">
    <property type="term" value="C:ribonucleoprotein complex"/>
    <property type="evidence" value="ECO:0007669"/>
    <property type="project" value="UniProtKB-KW"/>
</dbReference>
<dbReference type="GO" id="GO:0005840">
    <property type="term" value="C:ribosome"/>
    <property type="evidence" value="ECO:0007669"/>
    <property type="project" value="UniProtKB-KW"/>
</dbReference>
<dbReference type="GO" id="GO:0003735">
    <property type="term" value="F:structural constituent of ribosome"/>
    <property type="evidence" value="ECO:0007669"/>
    <property type="project" value="InterPro"/>
</dbReference>
<dbReference type="GO" id="GO:0006412">
    <property type="term" value="P:translation"/>
    <property type="evidence" value="ECO:0007669"/>
    <property type="project" value="UniProtKB-UniRule"/>
</dbReference>
<dbReference type="HAMAP" id="MF_00251">
    <property type="entry name" value="Ribosomal_bL36"/>
    <property type="match status" value="1"/>
</dbReference>
<dbReference type="InterPro" id="IPR000473">
    <property type="entry name" value="Ribosomal_bL36"/>
</dbReference>
<dbReference type="InterPro" id="IPR035977">
    <property type="entry name" value="Ribosomal_bL36_sp"/>
</dbReference>
<dbReference type="InterPro" id="IPR047621">
    <property type="entry name" value="Ribosomal_L36_bact"/>
</dbReference>
<dbReference type="NCBIfam" id="NF002021">
    <property type="entry name" value="PRK00831.1"/>
    <property type="match status" value="1"/>
</dbReference>
<dbReference type="PANTHER" id="PTHR47781">
    <property type="entry name" value="50S RIBOSOMAL PROTEIN L36 2"/>
    <property type="match status" value="1"/>
</dbReference>
<dbReference type="PANTHER" id="PTHR47781:SF1">
    <property type="entry name" value="LARGE RIBOSOMAL SUBUNIT PROTEIN BL36B"/>
    <property type="match status" value="1"/>
</dbReference>
<dbReference type="Pfam" id="PF00444">
    <property type="entry name" value="Ribosomal_L36"/>
    <property type="match status" value="1"/>
</dbReference>
<dbReference type="SUPFAM" id="SSF57840">
    <property type="entry name" value="Ribosomal protein L36"/>
    <property type="match status" value="1"/>
</dbReference>
<dbReference type="PROSITE" id="PS00828">
    <property type="entry name" value="RIBOSOMAL_L36"/>
    <property type="match status" value="1"/>
</dbReference>
<keyword id="KW-0687">Ribonucleoprotein</keyword>
<keyword id="KW-0689">Ribosomal protein</keyword>
<reference key="1">
    <citation type="journal article" date="2007" name="Nat. Genet.">
        <title>Genomic analysis of Bartonella identifies type IV secretion systems as host adaptability factors.</title>
        <authorList>
            <person name="Saenz H.L."/>
            <person name="Engel P."/>
            <person name="Stoeckli M.C."/>
            <person name="Lanz C."/>
            <person name="Raddatz G."/>
            <person name="Vayssier-Taussat M."/>
            <person name="Birtles R."/>
            <person name="Schuster S.C."/>
            <person name="Dehio C."/>
        </authorList>
    </citation>
    <scope>NUCLEOTIDE SEQUENCE [LARGE SCALE GENOMIC DNA]</scope>
    <source>
        <strain>CIP 105476 / IBS 506</strain>
    </source>
</reference>
<accession>A9IXS0</accession>
<name>RL36_BART1</name>
<comment type="similarity">
    <text evidence="1">Belongs to the bacterial ribosomal protein bL36 family.</text>
</comment>